<name>HDOX1_STAAR</name>
<evidence type="ECO:0000255" key="1">
    <source>
        <dbReference type="HAMAP-Rule" id="MF_01272"/>
    </source>
</evidence>
<reference key="1">
    <citation type="journal article" date="2004" name="Proc. Natl. Acad. Sci. U.S.A.">
        <title>Complete genomes of two clinical Staphylococcus aureus strains: evidence for the rapid evolution of virulence and drug resistance.</title>
        <authorList>
            <person name="Holden M.T.G."/>
            <person name="Feil E.J."/>
            <person name="Lindsay J.A."/>
            <person name="Peacock S.J."/>
            <person name="Day N.P.J."/>
            <person name="Enright M.C."/>
            <person name="Foster T.J."/>
            <person name="Moore C.E."/>
            <person name="Hurst L."/>
            <person name="Atkin R."/>
            <person name="Barron A."/>
            <person name="Bason N."/>
            <person name="Bentley S.D."/>
            <person name="Chillingworth C."/>
            <person name="Chillingworth T."/>
            <person name="Churcher C."/>
            <person name="Clark L."/>
            <person name="Corton C."/>
            <person name="Cronin A."/>
            <person name="Doggett J."/>
            <person name="Dowd L."/>
            <person name="Feltwell T."/>
            <person name="Hance Z."/>
            <person name="Harris B."/>
            <person name="Hauser H."/>
            <person name="Holroyd S."/>
            <person name="Jagels K."/>
            <person name="James K.D."/>
            <person name="Lennard N."/>
            <person name="Line A."/>
            <person name="Mayes R."/>
            <person name="Moule S."/>
            <person name="Mungall K."/>
            <person name="Ormond D."/>
            <person name="Quail M.A."/>
            <person name="Rabbinowitsch E."/>
            <person name="Rutherford K.M."/>
            <person name="Sanders M."/>
            <person name="Sharp S."/>
            <person name="Simmonds M."/>
            <person name="Stevens K."/>
            <person name="Whitehead S."/>
            <person name="Barrell B.G."/>
            <person name="Spratt B.G."/>
            <person name="Parkhill J."/>
        </authorList>
    </citation>
    <scope>NUCLEOTIDE SEQUENCE [LARGE SCALE GENOMIC DNA]</scope>
    <source>
        <strain>MRSA252</strain>
    </source>
</reference>
<gene>
    <name type="primary">isdG</name>
    <name type="ordered locus">SAR1109</name>
</gene>
<protein>
    <recommendedName>
        <fullName evidence="1">Heme oxygenase (staphylobilin-producing) 1</fullName>
        <ecNumber evidence="1">1.14.99.48</ecNumber>
    </recommendedName>
    <alternativeName>
        <fullName evidence="1">Heme-degrading monooxygenase 1</fullName>
    </alternativeName>
    <alternativeName>
        <fullName evidence="1">Iron-regulated surface determinant 1</fullName>
    </alternativeName>
    <alternativeName>
        <fullName evidence="1">Iron-responsive surface determinant 1</fullName>
    </alternativeName>
</protein>
<comment type="function">
    <text evidence="1">Allows bacterial pathogens to use the host heme as an iron source. Catalyzes the oxidative degradation of the heme macrocyclic porphyrin ring to the oxo-bilirubin chromophore staphylobilin (a mixture of the linear tetrapyrroles 5-oxo-delta-bilirubin and 15-oxo-beta-bilirubin) in the presence of a suitable electron donor such as ascorbate or NADPH--cytochrome P450 reductase, with subsequent release of free iron.</text>
</comment>
<comment type="catalytic activity">
    <reaction evidence="1">
        <text>heme b + 5 AH2 + 4 O2 + 2 H(+) = delta-staphylobilin + Fe(2+) + formaldehyde + 5 A + 4 H2O</text>
        <dbReference type="Rhea" id="RHEA:37039"/>
        <dbReference type="ChEBI" id="CHEBI:13193"/>
        <dbReference type="ChEBI" id="CHEBI:15377"/>
        <dbReference type="ChEBI" id="CHEBI:15378"/>
        <dbReference type="ChEBI" id="CHEBI:15379"/>
        <dbReference type="ChEBI" id="CHEBI:16842"/>
        <dbReference type="ChEBI" id="CHEBI:17499"/>
        <dbReference type="ChEBI" id="CHEBI:29033"/>
        <dbReference type="ChEBI" id="CHEBI:60344"/>
        <dbReference type="ChEBI" id="CHEBI:74361"/>
        <dbReference type="EC" id="1.14.99.48"/>
    </reaction>
</comment>
<comment type="catalytic activity">
    <reaction evidence="1">
        <text>heme b + 5 AH2 + 4 O2 + 2 H(+) = beta-staphylobilin + Fe(2+) + formaldehyde + 5 A + 4 H2O</text>
        <dbReference type="Rhea" id="RHEA:37363"/>
        <dbReference type="ChEBI" id="CHEBI:13193"/>
        <dbReference type="ChEBI" id="CHEBI:15377"/>
        <dbReference type="ChEBI" id="CHEBI:15378"/>
        <dbReference type="ChEBI" id="CHEBI:15379"/>
        <dbReference type="ChEBI" id="CHEBI:16842"/>
        <dbReference type="ChEBI" id="CHEBI:17499"/>
        <dbReference type="ChEBI" id="CHEBI:29033"/>
        <dbReference type="ChEBI" id="CHEBI:60344"/>
        <dbReference type="ChEBI" id="CHEBI:74362"/>
        <dbReference type="EC" id="1.14.99.48"/>
    </reaction>
</comment>
<comment type="subunit">
    <text evidence="1">Homodimer.</text>
</comment>
<comment type="subcellular location">
    <subcellularLocation>
        <location evidence="1">Cytoplasm</location>
    </subcellularLocation>
</comment>
<comment type="similarity">
    <text evidence="1">Belongs to the antibiotic biosynthesis monooxygenase family. Heme-degrading monooxygenase IsdG subfamily.</text>
</comment>
<accession>Q6GHV0</accession>
<sequence length="107" mass="12546">MKFMAENRLTLTKGTAKDIIERFYTRHGIETLEGFDGMFVTQTLEQEDFDEVKILTVWKSKQAFTDWLKSDVFKAAHKHVRSKNEDESSPIINNKVITYDIGYSYMK</sequence>
<feature type="chain" id="PRO_0000270083" description="Heme oxygenase (staphylobilin-producing) 1">
    <location>
        <begin position="1"/>
        <end position="107"/>
    </location>
</feature>
<feature type="domain" description="ABM" evidence="1">
    <location>
        <begin position="3"/>
        <end position="92"/>
    </location>
</feature>
<feature type="binding site" evidence="1">
    <location>
        <position position="7"/>
    </location>
    <ligand>
        <name>Fe cation</name>
        <dbReference type="ChEBI" id="CHEBI:24875"/>
    </ligand>
</feature>
<feature type="binding site" evidence="1">
    <location>
        <begin position="22"/>
        <end position="29"/>
    </location>
    <ligand>
        <name>heme</name>
        <dbReference type="ChEBI" id="CHEBI:30413"/>
    </ligand>
</feature>
<feature type="binding site" description="axial binding residue" evidence="1">
    <location>
        <position position="77"/>
    </location>
    <ligand>
        <name>heme</name>
        <dbReference type="ChEBI" id="CHEBI:30413"/>
    </ligand>
    <ligandPart>
        <name>Fe</name>
        <dbReference type="ChEBI" id="CHEBI:18248"/>
    </ligandPart>
</feature>
<feature type="site" description="Transition state stabilizer" evidence="1">
    <location>
        <position position="67"/>
    </location>
</feature>
<dbReference type="EC" id="1.14.99.48" evidence="1"/>
<dbReference type="EMBL" id="BX571856">
    <property type="protein sequence ID" value="CAG40111.1"/>
    <property type="molecule type" value="Genomic_DNA"/>
</dbReference>
<dbReference type="RefSeq" id="WP_000670950.1">
    <property type="nucleotide sequence ID" value="NC_002952.2"/>
</dbReference>
<dbReference type="SMR" id="Q6GHV0"/>
<dbReference type="KEGG" id="sar:SAR1109"/>
<dbReference type="HOGENOM" id="CLU_141544_2_1_9"/>
<dbReference type="Proteomes" id="UP000000596">
    <property type="component" value="Chromosome"/>
</dbReference>
<dbReference type="GO" id="GO:0005737">
    <property type="term" value="C:cytoplasm"/>
    <property type="evidence" value="ECO:0007669"/>
    <property type="project" value="UniProtKB-SubCell"/>
</dbReference>
<dbReference type="GO" id="GO:0020037">
    <property type="term" value="F:heme binding"/>
    <property type="evidence" value="ECO:0007669"/>
    <property type="project" value="UniProtKB-UniRule"/>
</dbReference>
<dbReference type="GO" id="GO:0004392">
    <property type="term" value="F:heme oxygenase (decyclizing) activity"/>
    <property type="evidence" value="ECO:0007669"/>
    <property type="project" value="UniProtKB-UniRule"/>
</dbReference>
<dbReference type="GO" id="GO:0005506">
    <property type="term" value="F:iron ion binding"/>
    <property type="evidence" value="ECO:0007669"/>
    <property type="project" value="UniProtKB-UniRule"/>
</dbReference>
<dbReference type="GO" id="GO:0042167">
    <property type="term" value="P:heme catabolic process"/>
    <property type="evidence" value="ECO:0007669"/>
    <property type="project" value="UniProtKB-UniRule"/>
</dbReference>
<dbReference type="GO" id="GO:0033212">
    <property type="term" value="P:iron import into cell"/>
    <property type="evidence" value="ECO:0007669"/>
    <property type="project" value="InterPro"/>
</dbReference>
<dbReference type="Gene3D" id="3.30.70.100">
    <property type="match status" value="1"/>
</dbReference>
<dbReference type="HAMAP" id="MF_01272">
    <property type="entry name" value="Heme_degrading_monooxygenase"/>
    <property type="match status" value="1"/>
</dbReference>
<dbReference type="InterPro" id="IPR007138">
    <property type="entry name" value="ABM_dom"/>
</dbReference>
<dbReference type="InterPro" id="IPR011008">
    <property type="entry name" value="Dimeric_a/b-barrel"/>
</dbReference>
<dbReference type="InterPro" id="IPR050404">
    <property type="entry name" value="Heme-degrading_MO"/>
</dbReference>
<dbReference type="InterPro" id="IPR023953">
    <property type="entry name" value="IsdG"/>
</dbReference>
<dbReference type="NCBIfam" id="NF009837">
    <property type="entry name" value="PRK13312.1"/>
    <property type="match status" value="1"/>
</dbReference>
<dbReference type="PANTHER" id="PTHR34474:SF4">
    <property type="entry name" value="HEME OXYGENASE (STAPHYLOBILIN-PRODUCING) 1"/>
    <property type="match status" value="1"/>
</dbReference>
<dbReference type="PANTHER" id="PTHR34474">
    <property type="entry name" value="SIGNAL TRANSDUCTION PROTEIN TRAP"/>
    <property type="match status" value="1"/>
</dbReference>
<dbReference type="Pfam" id="PF03992">
    <property type="entry name" value="ABM"/>
    <property type="match status" value="1"/>
</dbReference>
<dbReference type="SUPFAM" id="SSF54909">
    <property type="entry name" value="Dimeric alpha+beta barrel"/>
    <property type="match status" value="1"/>
</dbReference>
<dbReference type="PROSITE" id="PS51725">
    <property type="entry name" value="ABM"/>
    <property type="match status" value="1"/>
</dbReference>
<keyword id="KW-0963">Cytoplasm</keyword>
<keyword id="KW-0349">Heme</keyword>
<keyword id="KW-0408">Iron</keyword>
<keyword id="KW-0479">Metal-binding</keyword>
<keyword id="KW-0503">Monooxygenase</keyword>
<keyword id="KW-0560">Oxidoreductase</keyword>
<organism>
    <name type="scientific">Staphylococcus aureus (strain MRSA252)</name>
    <dbReference type="NCBI Taxonomy" id="282458"/>
    <lineage>
        <taxon>Bacteria</taxon>
        <taxon>Bacillati</taxon>
        <taxon>Bacillota</taxon>
        <taxon>Bacilli</taxon>
        <taxon>Bacillales</taxon>
        <taxon>Staphylococcaceae</taxon>
        <taxon>Staphylococcus</taxon>
    </lineage>
</organism>
<proteinExistence type="inferred from homology"/>